<protein>
    <recommendedName>
        <fullName evidence="1">Nucleoprotein</fullName>
    </recommendedName>
    <alternativeName>
        <fullName evidence="1">Nucleocapsid protein</fullName>
        <shortName evidence="1">Protein N</shortName>
    </alternativeName>
</protein>
<comment type="function">
    <text evidence="1">Encapsidates the negative strand viral RNA, protecting it from nucleases. The encapsidated genomic RNA is termed the ribonucleoprotein (RNP) and serves as template for transcription and replication. The RNP needs to be localized in the host nucleus to start an infectious cycle, but is too large to diffuse through the nuclear pore complex. NP comprises at least 2 nuclear localization signals that are responsible for the active RNP import into the nucleus through cellular importin alpha/beta pathway. Later in the infection, nclear export of RNPs are mediated through viral proteins NEP interacting with M1 which binds nucleoproteins. It is possible that nucleoprotein binds directly host exportin-1/XPO1 and plays an active role in RNPs nuclear export. M1 interaction with RNP seems to hide nucleoprotein's nuclear localization signals. Soon after a virion infects a new cell, M1 dissociates from the RNP under acidification of the virion driven by M2 protein. Dissociation of M1 from RNP unmasks nucleoprotein's nuclear localization signals, targeting the RNP to the nucleus.</text>
</comment>
<comment type="subunit">
    <text evidence="1">Homomultimerizes to form the nucleocapsid. May bind host exportin-1/XPO1. Binds to viral genomic RNA. Protein-RNA contacts are mediated by a combination of electrostatic interactions between positively charged residues and the phosphate backbone and planar interactions between aromatic side chains and bases.</text>
</comment>
<comment type="subcellular location">
    <subcellularLocation>
        <location evidence="1">Virion</location>
    </subcellularLocation>
    <subcellularLocation>
        <location evidence="1">Host nucleus</location>
    </subcellularLocation>
</comment>
<comment type="PTM">
    <text evidence="1">Late in virus-infected cells, may be cleaved from a 56-kDa protein to a 53-kDa protein by a cellular caspase. This cleavage might be a marker for the onset of apoptosis in infected cells or have a specific function in virus host interaction.</text>
</comment>
<comment type="similarity">
    <text evidence="1">Belongs to the influenza viruses nucleoprotein family.</text>
</comment>
<organismHost>
    <name type="scientific">Aves</name>
    <dbReference type="NCBI Taxonomy" id="8782"/>
</organismHost>
<organismHost>
    <name type="scientific">Felis catus</name>
    <name type="common">Cat</name>
    <name type="synonym">Felis silvestris catus</name>
    <dbReference type="NCBI Taxonomy" id="9685"/>
</organismHost>
<organismHost>
    <name type="scientific">Homo sapiens</name>
    <name type="common">Human</name>
    <dbReference type="NCBI Taxonomy" id="9606"/>
</organismHost>
<organismHost>
    <name type="scientific">Panthera pardus</name>
    <name type="common">Leopard</name>
    <name type="synonym">Felis pardus</name>
    <dbReference type="NCBI Taxonomy" id="9691"/>
</organismHost>
<organismHost>
    <name type="scientific">Panthera tigris</name>
    <name type="common">Tiger</name>
    <dbReference type="NCBI Taxonomy" id="9694"/>
</organismHost>
<organismHost>
    <name type="scientific">Sus scrofa</name>
    <name type="common">Pig</name>
    <dbReference type="NCBI Taxonomy" id="9823"/>
</organismHost>
<organism>
    <name type="scientific">Influenza A virus (strain A/Chicken/Hong Kong/YU22/2002 H5N1 genotype Z)</name>
    <dbReference type="NCBI Taxonomy" id="284177"/>
    <lineage>
        <taxon>Viruses</taxon>
        <taxon>Riboviria</taxon>
        <taxon>Orthornavirae</taxon>
        <taxon>Negarnaviricota</taxon>
        <taxon>Polyploviricotina</taxon>
        <taxon>Insthoviricetes</taxon>
        <taxon>Articulavirales</taxon>
        <taxon>Orthomyxoviridae</taxon>
        <taxon>Alphainfluenzavirus</taxon>
        <taxon>Alphainfluenzavirus influenzae</taxon>
        <taxon>Influenza A virus</taxon>
    </lineage>
</organism>
<proteinExistence type="inferred from homology"/>
<gene>
    <name evidence="1" type="primary">NP</name>
</gene>
<sequence>MASQGTKRSYEQMETGGERQNATEIRASVGRMVSGIGRFYIQMCTELKLSDYEGRLIQNSITIERMVLSAFDERRNRYLEEHPSAGKDPKKTGGPIYRRRDGKWVRELILYDKEEIRRIWRQANNGEDATAGLTHLMIWHSNLNDATYQRTRALVRTGMDPRMCSLMQGSTLPRRSGAAGAAVKGVGTMVMELIRMIKRGINDRNFWRGENGRRTRIAYERMCNILKGKFQTAAQRAMMDQVRESRNPGNAEIEDLIFLARSALILRGSVAHKSCLPACVYGLAVASGYDFEREGYSLVGIDPFRLLQNSQVFSLIRPNENPAHKSQLVWMACHSAAFEDLRVSSFIRGTRVVPRGQLSTRGVQIASNENMEAMDSNTLELRSRYWAIRTRSGGNTNQQRASAGQISVQPTFSVQRNLPFERATIMAAFTGNTEGRTSDMRTEIIRMMESARPEDVSFQGRGVFELSDEKATNPIVPSFDMNNEGSYFFGDNAEEYDN</sequence>
<keyword id="KW-0167">Capsid protein</keyword>
<keyword id="KW-1139">Helical capsid protein</keyword>
<keyword id="KW-1048">Host nucleus</keyword>
<keyword id="KW-0945">Host-virus interaction</keyword>
<keyword id="KW-0687">Ribonucleoprotein</keyword>
<keyword id="KW-0694">RNA-binding</keyword>
<keyword id="KW-0543">Viral nucleoprotein</keyword>
<keyword id="KW-1163">Viral penetration into host nucleus</keyword>
<keyword id="KW-0946">Virion</keyword>
<keyword id="KW-1160">Virus entry into host cell</keyword>
<evidence type="ECO:0000255" key="1">
    <source>
        <dbReference type="HAMAP-Rule" id="MF_04070"/>
    </source>
</evidence>
<evidence type="ECO:0000256" key="2">
    <source>
        <dbReference type="SAM" id="MobiDB-lite"/>
    </source>
</evidence>
<dbReference type="EMBL" id="AY651514">
    <property type="protein sequence ID" value="AAT70645.2"/>
    <property type="molecule type" value="Genomic_RNA"/>
</dbReference>
<dbReference type="SMR" id="Q6DPE5"/>
<dbReference type="GO" id="GO:0019029">
    <property type="term" value="C:helical viral capsid"/>
    <property type="evidence" value="ECO:0007669"/>
    <property type="project" value="UniProtKB-UniRule"/>
</dbReference>
<dbReference type="GO" id="GO:0043657">
    <property type="term" value="C:host cell"/>
    <property type="evidence" value="ECO:0007669"/>
    <property type="project" value="GOC"/>
</dbReference>
<dbReference type="GO" id="GO:0042025">
    <property type="term" value="C:host cell nucleus"/>
    <property type="evidence" value="ECO:0007669"/>
    <property type="project" value="UniProtKB-SubCell"/>
</dbReference>
<dbReference type="GO" id="GO:1990904">
    <property type="term" value="C:ribonucleoprotein complex"/>
    <property type="evidence" value="ECO:0007669"/>
    <property type="project" value="UniProtKB-KW"/>
</dbReference>
<dbReference type="GO" id="GO:0019013">
    <property type="term" value="C:viral nucleocapsid"/>
    <property type="evidence" value="ECO:0007669"/>
    <property type="project" value="UniProtKB-UniRule"/>
</dbReference>
<dbReference type="GO" id="GO:0003723">
    <property type="term" value="F:RNA binding"/>
    <property type="evidence" value="ECO:0007669"/>
    <property type="project" value="UniProtKB-UniRule"/>
</dbReference>
<dbReference type="GO" id="GO:0005198">
    <property type="term" value="F:structural molecule activity"/>
    <property type="evidence" value="ECO:0007669"/>
    <property type="project" value="UniProtKB-UniRule"/>
</dbReference>
<dbReference type="GO" id="GO:0046718">
    <property type="term" value="P:symbiont entry into host cell"/>
    <property type="evidence" value="ECO:0007669"/>
    <property type="project" value="UniProtKB-KW"/>
</dbReference>
<dbReference type="GO" id="GO:0075732">
    <property type="term" value="P:viral penetration into host nucleus"/>
    <property type="evidence" value="ECO:0007669"/>
    <property type="project" value="UniProtKB-UniRule"/>
</dbReference>
<dbReference type="HAMAP" id="MF_04070">
    <property type="entry name" value="INFV_NCAP"/>
    <property type="match status" value="1"/>
</dbReference>
<dbReference type="InterPro" id="IPR002141">
    <property type="entry name" value="Flu_NP"/>
</dbReference>
<dbReference type="Pfam" id="PF00506">
    <property type="entry name" value="Flu_NP"/>
    <property type="match status" value="1"/>
</dbReference>
<dbReference type="SUPFAM" id="SSF161003">
    <property type="entry name" value="flu NP-like"/>
    <property type="match status" value="1"/>
</dbReference>
<name>NCAP_I02A6</name>
<reference key="1">
    <citation type="journal article" date="2004" name="Nature">
        <title>Genesis of a highly pathogenic and potentially pandemic H5N1 influenza virus in eastern Asia.</title>
        <authorList>
            <person name="Li K.S."/>
            <person name="Guan Y."/>
            <person name="Wang J."/>
            <person name="Smith G.J.D."/>
            <person name="Xu K.M."/>
            <person name="Duan L."/>
            <person name="Rahardjo A.P."/>
            <person name="Puthavathana P."/>
            <person name="Buranathai C."/>
            <person name="Nguyen T.D."/>
            <person name="Estoepangestie A.T.S."/>
            <person name="Chaisingh A."/>
            <person name="Auewarakul P."/>
            <person name="Long H.T."/>
            <person name="Hanh N.T.H."/>
            <person name="Webby R.J."/>
            <person name="Poon L.L.M."/>
            <person name="Chen H."/>
            <person name="Shortridge K.F."/>
            <person name="Yuen K.Y."/>
            <person name="Webster R.G."/>
            <person name="Peiris J.S.M."/>
        </authorList>
    </citation>
    <scope>NUCLEOTIDE SEQUENCE [GENOMIC RNA]</scope>
</reference>
<reference key="2">
    <citation type="submission" date="2008-03" db="EMBL/GenBank/DDBJ databases">
        <authorList>
            <person name="Li K.S."/>
            <person name="Guan Y."/>
            <person name="Wang J."/>
            <person name="Smith G.J.D."/>
            <person name="Xu K.M."/>
            <person name="Duan L."/>
            <person name="Rahardjo A.P."/>
            <person name="Puthavathana P."/>
            <person name="Buranathai C."/>
            <person name="Nguyen T.D."/>
            <person name="Estoepangestie A.T.S."/>
            <person name="Chaisingh A."/>
            <person name="Auewarakul P."/>
            <person name="Long H.T."/>
            <person name="Hanh N.T.H."/>
            <person name="Lim W."/>
            <person name="Webby R.J."/>
            <person name="Poon L.L.M."/>
            <person name="Chen H."/>
            <person name="Shortridge K.F."/>
            <person name="Yuen K.Y."/>
            <person name="Webster R.G."/>
            <person name="Peiris J.S.M."/>
        </authorList>
    </citation>
    <scope>SEQUENCE REVISION</scope>
</reference>
<accession>Q6DPE5</accession>
<feature type="chain" id="PRO_0000310924" description="Nucleoprotein">
    <location>
        <begin position="1"/>
        <end position="498"/>
    </location>
</feature>
<feature type="region of interest" description="Disordered" evidence="2">
    <location>
        <begin position="1"/>
        <end position="21"/>
    </location>
</feature>
<feature type="short sequence motif" description="Unconventional nuclear localization signal" evidence="1">
    <location>
        <begin position="1"/>
        <end position="18"/>
    </location>
</feature>
<feature type="short sequence motif" description="Bipartite nuclear localization signal" evidence="1">
    <location>
        <begin position="198"/>
        <end position="216"/>
    </location>
</feature>